<dbReference type="EC" id="2.7.1.71" evidence="1"/>
<dbReference type="EMBL" id="CP000088">
    <property type="protein sequence ID" value="AAZ55129.1"/>
    <property type="molecule type" value="Genomic_DNA"/>
</dbReference>
<dbReference type="RefSeq" id="WP_011291538.1">
    <property type="nucleotide sequence ID" value="NC_007333.1"/>
</dbReference>
<dbReference type="SMR" id="Q47QY8"/>
<dbReference type="STRING" id="269800.Tfu_1091"/>
<dbReference type="KEGG" id="tfu:Tfu_1091"/>
<dbReference type="eggNOG" id="COG0703">
    <property type="taxonomic scope" value="Bacteria"/>
</dbReference>
<dbReference type="HOGENOM" id="CLU_057607_3_3_11"/>
<dbReference type="OrthoDB" id="9800332at2"/>
<dbReference type="UniPathway" id="UPA00053">
    <property type="reaction ID" value="UER00088"/>
</dbReference>
<dbReference type="GO" id="GO:0005829">
    <property type="term" value="C:cytosol"/>
    <property type="evidence" value="ECO:0007669"/>
    <property type="project" value="TreeGrafter"/>
</dbReference>
<dbReference type="GO" id="GO:0005524">
    <property type="term" value="F:ATP binding"/>
    <property type="evidence" value="ECO:0007669"/>
    <property type="project" value="UniProtKB-UniRule"/>
</dbReference>
<dbReference type="GO" id="GO:0000287">
    <property type="term" value="F:magnesium ion binding"/>
    <property type="evidence" value="ECO:0007669"/>
    <property type="project" value="UniProtKB-UniRule"/>
</dbReference>
<dbReference type="GO" id="GO:0004765">
    <property type="term" value="F:shikimate kinase activity"/>
    <property type="evidence" value="ECO:0007669"/>
    <property type="project" value="UniProtKB-UniRule"/>
</dbReference>
<dbReference type="GO" id="GO:0008652">
    <property type="term" value="P:amino acid biosynthetic process"/>
    <property type="evidence" value="ECO:0007669"/>
    <property type="project" value="UniProtKB-KW"/>
</dbReference>
<dbReference type="GO" id="GO:0009073">
    <property type="term" value="P:aromatic amino acid family biosynthetic process"/>
    <property type="evidence" value="ECO:0007669"/>
    <property type="project" value="UniProtKB-KW"/>
</dbReference>
<dbReference type="GO" id="GO:0009423">
    <property type="term" value="P:chorismate biosynthetic process"/>
    <property type="evidence" value="ECO:0007669"/>
    <property type="project" value="UniProtKB-UniRule"/>
</dbReference>
<dbReference type="CDD" id="cd00464">
    <property type="entry name" value="SK"/>
    <property type="match status" value="1"/>
</dbReference>
<dbReference type="Gene3D" id="3.40.50.300">
    <property type="entry name" value="P-loop containing nucleotide triphosphate hydrolases"/>
    <property type="match status" value="1"/>
</dbReference>
<dbReference type="HAMAP" id="MF_00109">
    <property type="entry name" value="Shikimate_kinase"/>
    <property type="match status" value="1"/>
</dbReference>
<dbReference type="InterPro" id="IPR027417">
    <property type="entry name" value="P-loop_NTPase"/>
</dbReference>
<dbReference type="InterPro" id="IPR031322">
    <property type="entry name" value="Shikimate/glucono_kinase"/>
</dbReference>
<dbReference type="InterPro" id="IPR000623">
    <property type="entry name" value="Shikimate_kinase/TSH1"/>
</dbReference>
<dbReference type="InterPro" id="IPR023000">
    <property type="entry name" value="Shikimate_kinase_CS"/>
</dbReference>
<dbReference type="PANTHER" id="PTHR21087">
    <property type="entry name" value="SHIKIMATE KINASE"/>
    <property type="match status" value="1"/>
</dbReference>
<dbReference type="PANTHER" id="PTHR21087:SF16">
    <property type="entry name" value="SHIKIMATE KINASE 1, CHLOROPLASTIC"/>
    <property type="match status" value="1"/>
</dbReference>
<dbReference type="Pfam" id="PF01202">
    <property type="entry name" value="SKI"/>
    <property type="match status" value="1"/>
</dbReference>
<dbReference type="PRINTS" id="PR01100">
    <property type="entry name" value="SHIKIMTKNASE"/>
</dbReference>
<dbReference type="SUPFAM" id="SSF52540">
    <property type="entry name" value="P-loop containing nucleoside triphosphate hydrolases"/>
    <property type="match status" value="1"/>
</dbReference>
<dbReference type="PROSITE" id="PS01128">
    <property type="entry name" value="SHIKIMATE_KINASE"/>
    <property type="match status" value="1"/>
</dbReference>
<keyword id="KW-0028">Amino-acid biosynthesis</keyword>
<keyword id="KW-0057">Aromatic amino acid biosynthesis</keyword>
<keyword id="KW-0067">ATP-binding</keyword>
<keyword id="KW-0963">Cytoplasm</keyword>
<keyword id="KW-0418">Kinase</keyword>
<keyword id="KW-0460">Magnesium</keyword>
<keyword id="KW-0479">Metal-binding</keyword>
<keyword id="KW-0547">Nucleotide-binding</keyword>
<keyword id="KW-0808">Transferase</keyword>
<gene>
    <name evidence="1" type="primary">aroK</name>
    <name type="ordered locus">Tfu_1091</name>
</gene>
<accession>Q47QY8</accession>
<feature type="chain" id="PRO_0000237951" description="Shikimate kinase">
    <location>
        <begin position="1"/>
        <end position="172"/>
    </location>
</feature>
<feature type="binding site" evidence="1">
    <location>
        <begin position="14"/>
        <end position="19"/>
    </location>
    <ligand>
        <name>ATP</name>
        <dbReference type="ChEBI" id="CHEBI:30616"/>
    </ligand>
</feature>
<feature type="binding site" evidence="1">
    <location>
        <position position="18"/>
    </location>
    <ligand>
        <name>Mg(2+)</name>
        <dbReference type="ChEBI" id="CHEBI:18420"/>
    </ligand>
</feature>
<feature type="binding site" evidence="1">
    <location>
        <position position="36"/>
    </location>
    <ligand>
        <name>substrate</name>
    </ligand>
</feature>
<feature type="binding site" evidence="1">
    <location>
        <position position="60"/>
    </location>
    <ligand>
        <name>substrate</name>
    </ligand>
</feature>
<feature type="binding site" evidence="1">
    <location>
        <position position="82"/>
    </location>
    <ligand>
        <name>substrate</name>
    </ligand>
</feature>
<feature type="binding site" evidence="1">
    <location>
        <position position="119"/>
    </location>
    <ligand>
        <name>ATP</name>
        <dbReference type="ChEBI" id="CHEBI:30616"/>
    </ligand>
</feature>
<feature type="binding site" evidence="1">
    <location>
        <position position="137"/>
    </location>
    <ligand>
        <name>substrate</name>
    </ligand>
</feature>
<protein>
    <recommendedName>
        <fullName evidence="1">Shikimate kinase</fullName>
        <shortName evidence="1">SK</shortName>
        <ecNumber evidence="1">2.7.1.71</ecNumber>
    </recommendedName>
</protein>
<organism>
    <name type="scientific">Thermobifida fusca (strain YX)</name>
    <dbReference type="NCBI Taxonomy" id="269800"/>
    <lineage>
        <taxon>Bacteria</taxon>
        <taxon>Bacillati</taxon>
        <taxon>Actinomycetota</taxon>
        <taxon>Actinomycetes</taxon>
        <taxon>Streptosporangiales</taxon>
        <taxon>Nocardiopsidaceae</taxon>
        <taxon>Thermobifida</taxon>
    </lineage>
</organism>
<reference key="1">
    <citation type="journal article" date="2007" name="J. Bacteriol.">
        <title>Genome sequence and analysis of the soil cellulolytic actinomycete Thermobifida fusca YX.</title>
        <authorList>
            <person name="Lykidis A."/>
            <person name="Mavromatis K."/>
            <person name="Ivanova N."/>
            <person name="Anderson I."/>
            <person name="Land M."/>
            <person name="DiBartolo G."/>
            <person name="Martinez M."/>
            <person name="Lapidus A."/>
            <person name="Lucas S."/>
            <person name="Copeland A."/>
            <person name="Richardson P."/>
            <person name="Wilson D.B."/>
            <person name="Kyrpides N."/>
        </authorList>
    </citation>
    <scope>NUCLEOTIDE SEQUENCE [LARGE SCALE GENOMIC DNA]</scope>
    <source>
        <strain>YX</strain>
    </source>
</reference>
<sequence>MSSRPLAVLIGSPGAGKTTVGRALAERLGVDLLDTDAEIERRAGKTVSDIFVEDGEEAFRALEREVVAEALASHPGVVALGGGAILNEQTRADLAGHRVVYLEVEFADAAKRVGLDTARPLLLGNPRARLKALLRERLPIYQSLATLTVSTSEHTPEEAAELIAKELPAAGD</sequence>
<evidence type="ECO:0000255" key="1">
    <source>
        <dbReference type="HAMAP-Rule" id="MF_00109"/>
    </source>
</evidence>
<comment type="function">
    <text evidence="1">Catalyzes the specific phosphorylation of the 3-hydroxyl group of shikimic acid using ATP as a cosubstrate.</text>
</comment>
<comment type="catalytic activity">
    <reaction evidence="1">
        <text>shikimate + ATP = 3-phosphoshikimate + ADP + H(+)</text>
        <dbReference type="Rhea" id="RHEA:13121"/>
        <dbReference type="ChEBI" id="CHEBI:15378"/>
        <dbReference type="ChEBI" id="CHEBI:30616"/>
        <dbReference type="ChEBI" id="CHEBI:36208"/>
        <dbReference type="ChEBI" id="CHEBI:145989"/>
        <dbReference type="ChEBI" id="CHEBI:456216"/>
        <dbReference type="EC" id="2.7.1.71"/>
    </reaction>
</comment>
<comment type="cofactor">
    <cofactor evidence="1">
        <name>Mg(2+)</name>
        <dbReference type="ChEBI" id="CHEBI:18420"/>
    </cofactor>
    <text evidence="1">Binds 1 Mg(2+) ion per subunit.</text>
</comment>
<comment type="pathway">
    <text evidence="1">Metabolic intermediate biosynthesis; chorismate biosynthesis; chorismate from D-erythrose 4-phosphate and phosphoenolpyruvate: step 5/7.</text>
</comment>
<comment type="subunit">
    <text evidence="1">Monomer.</text>
</comment>
<comment type="subcellular location">
    <subcellularLocation>
        <location evidence="1">Cytoplasm</location>
    </subcellularLocation>
</comment>
<comment type="similarity">
    <text evidence="1">Belongs to the shikimate kinase family.</text>
</comment>
<proteinExistence type="inferred from homology"/>
<name>AROK_THEFY</name>